<sequence length="326" mass="37120">MYGIEYTTILIFLTSITLLNYILKSITRIMDYIIYRFLLIVVVLATMINAQNYGVNLPITGSMDTAYANSTQSEPFLTSTLCLYYPVEASNEIADTEWKDTLSQLFLTKGWPTGSVYFKEYTDIAAFSVEPQLYCDYNLVLMKYDSTQELDMSELADLILNEWLCNPMDITLYYYQQTDEANKWISMGSSCTVKVCPLNTQTLGIGCLITNPDTFETVATTEKLVITDVVDGVNHKLNVTTATCTIRNCKKLGPRENVAIIQVGGANVLDITADPTTAPQTERMMRINWKKWWQVFYTVVDYVNQIIQTMSKRSRSLNSSAFYYRV</sequence>
<dbReference type="EMBL" id="X00896">
    <property type="protein sequence ID" value="CAA25424.1"/>
    <property type="molecule type" value="Unassigned_RNA"/>
</dbReference>
<dbReference type="SMR" id="P03534"/>
<dbReference type="Proteomes" id="UP000008657">
    <property type="component" value="Genome"/>
</dbReference>
<dbReference type="GO" id="GO:0044166">
    <property type="term" value="C:host cell endoplasmic reticulum lumen"/>
    <property type="evidence" value="ECO:0007669"/>
    <property type="project" value="UniProtKB-SubCell"/>
</dbReference>
<dbReference type="GO" id="GO:0039621">
    <property type="term" value="C:T=13 icosahedral viral capsid"/>
    <property type="evidence" value="ECO:0007669"/>
    <property type="project" value="UniProtKB-UniRule"/>
</dbReference>
<dbReference type="GO" id="GO:0039624">
    <property type="term" value="C:viral outer capsid"/>
    <property type="evidence" value="ECO:0007669"/>
    <property type="project" value="UniProtKB-UniRule"/>
</dbReference>
<dbReference type="GO" id="GO:0046872">
    <property type="term" value="F:metal ion binding"/>
    <property type="evidence" value="ECO:0007669"/>
    <property type="project" value="UniProtKB-KW"/>
</dbReference>
<dbReference type="Gene3D" id="3.40.50.11130">
    <property type="entry name" value="Glycoprotein VP7, domain 1"/>
    <property type="match status" value="1"/>
</dbReference>
<dbReference type="Gene3D" id="2.60.120.800">
    <property type="entry name" value="Rotavirus outer-layer protein VP7, domain 2"/>
    <property type="match status" value="1"/>
</dbReference>
<dbReference type="HAMAP" id="MF_04130">
    <property type="entry name" value="Rota_VP7"/>
    <property type="match status" value="1"/>
</dbReference>
<dbReference type="HAMAP" id="MF_04131">
    <property type="entry name" value="Rota_VP7_A"/>
    <property type="match status" value="1"/>
</dbReference>
<dbReference type="InterPro" id="IPR001963">
    <property type="entry name" value="VP7"/>
</dbReference>
<dbReference type="InterPro" id="IPR042207">
    <property type="entry name" value="VP7_1"/>
</dbReference>
<dbReference type="InterPro" id="IPR042210">
    <property type="entry name" value="VP7_2"/>
</dbReference>
<dbReference type="Pfam" id="PF00434">
    <property type="entry name" value="VP7"/>
    <property type="match status" value="1"/>
</dbReference>
<feature type="signal peptide" evidence="2">
    <location>
        <begin position="1"/>
        <end position="50"/>
    </location>
</feature>
<feature type="chain" id="PRO_0000149587" description="Outer capsid glycoprotein VP7" evidence="2">
    <location>
        <begin position="51"/>
        <end position="326"/>
    </location>
</feature>
<feature type="region of interest" description="CNP motif; interaction with ITGAV/ITGB3" evidence="2">
    <location>
        <begin position="165"/>
        <end position="167"/>
    </location>
</feature>
<feature type="region of interest" description="GPR motif; interaction with ITGAX/ITGB2" evidence="2">
    <location>
        <begin position="253"/>
        <end position="255"/>
    </location>
</feature>
<feature type="binding site" evidence="2">
    <location>
        <position position="95"/>
    </location>
    <ligand>
        <name>Ca(2+)</name>
        <dbReference type="ChEBI" id="CHEBI:29108"/>
        <label>1</label>
    </ligand>
</feature>
<feature type="binding site" evidence="2">
    <location>
        <position position="177"/>
    </location>
    <ligand>
        <name>Ca(2+)</name>
        <dbReference type="ChEBI" id="CHEBI:29108"/>
        <label>2</label>
    </ligand>
</feature>
<feature type="binding site" evidence="2">
    <location>
        <position position="206"/>
    </location>
    <ligand>
        <name>Ca(2+)</name>
        <dbReference type="ChEBI" id="CHEBI:29108"/>
        <label>1</label>
    </ligand>
</feature>
<feature type="binding site" evidence="2">
    <location>
        <position position="214"/>
    </location>
    <ligand>
        <name>Ca(2+)</name>
        <dbReference type="ChEBI" id="CHEBI:29108"/>
        <label>1</label>
    </ligand>
</feature>
<feature type="binding site" evidence="2">
    <location>
        <position position="216"/>
    </location>
    <ligand>
        <name>Ca(2+)</name>
        <dbReference type="ChEBI" id="CHEBI:29108"/>
        <label>1</label>
    </ligand>
</feature>
<feature type="binding site" evidence="2">
    <location>
        <position position="228"/>
    </location>
    <ligand>
        <name>Ca(2+)</name>
        <dbReference type="ChEBI" id="CHEBI:29108"/>
        <label>2</label>
    </ligand>
</feature>
<feature type="binding site" evidence="2">
    <location>
        <position position="229"/>
    </location>
    <ligand>
        <name>Ca(2+)</name>
        <dbReference type="ChEBI" id="CHEBI:29108"/>
        <label>2</label>
    </ligand>
</feature>
<feature type="binding site" evidence="2">
    <location>
        <position position="231"/>
    </location>
    <ligand>
        <name>Ca(2+)</name>
        <dbReference type="ChEBI" id="CHEBI:29108"/>
        <label>2</label>
    </ligand>
</feature>
<feature type="binding site" evidence="2">
    <location>
        <position position="301"/>
    </location>
    <ligand>
        <name>Ca(2+)</name>
        <dbReference type="ChEBI" id="CHEBI:29108"/>
        <label>2</label>
    </ligand>
</feature>
<feature type="glycosylation site" description="N-linked (GlcNAc...) asparagine; by host" evidence="1">
    <location>
        <position position="69"/>
    </location>
</feature>
<feature type="glycosylation site" description="N-linked (GlcNAc...) asparagine; by host" evidence="1">
    <location>
        <position position="238"/>
    </location>
</feature>
<feature type="glycosylation site" description="N-linked (GlcNAc...) asparagine; by host" evidence="1">
    <location>
        <position position="318"/>
    </location>
</feature>
<feature type="disulfide bond" evidence="2">
    <location>
        <begin position="82"/>
        <end position="135"/>
    </location>
</feature>
<feature type="disulfide bond" evidence="2">
    <location>
        <begin position="165"/>
        <end position="249"/>
    </location>
</feature>
<feature type="disulfide bond" evidence="2">
    <location>
        <begin position="191"/>
        <end position="244"/>
    </location>
</feature>
<feature type="disulfide bond" evidence="2">
    <location>
        <begin position="196"/>
        <end position="207"/>
    </location>
</feature>
<feature type="splice variant" id="VSP_038612" description="In isoform 2." evidence="3">
    <location>
        <begin position="1"/>
        <end position="29"/>
    </location>
</feature>
<accession>P03534</accession>
<keyword id="KW-0024">Alternative initiation</keyword>
<keyword id="KW-0106">Calcium</keyword>
<keyword id="KW-0167">Capsid protein</keyword>
<keyword id="KW-1015">Disulfide bond</keyword>
<keyword id="KW-0325">Glycoprotein</keyword>
<keyword id="KW-1038">Host endoplasmic reticulum</keyword>
<keyword id="KW-0945">Host-virus interaction</keyword>
<keyword id="KW-0479">Metal-binding</keyword>
<keyword id="KW-1152">Outer capsid protein</keyword>
<keyword id="KW-0732">Signal</keyword>
<keyword id="KW-1146">T=13 icosahedral capsid protein</keyword>
<keyword id="KW-0946">Virion</keyword>
<proteinExistence type="evidence at transcript level"/>
<evidence type="ECO:0000255" key="1"/>
<evidence type="ECO:0000255" key="2">
    <source>
        <dbReference type="HAMAP-Rule" id="MF_04131"/>
    </source>
</evidence>
<evidence type="ECO:0000305" key="3"/>
<organism>
    <name type="scientific">Rotavirus A (strain RVA/Cow/United Kingdom/UK/1975/G6P7[5])</name>
    <name type="common">RV-A</name>
    <dbReference type="NCBI Taxonomy" id="10934"/>
    <lineage>
        <taxon>Viruses</taxon>
        <taxon>Riboviria</taxon>
        <taxon>Orthornavirae</taxon>
        <taxon>Duplornaviricota</taxon>
        <taxon>Resentoviricetes</taxon>
        <taxon>Reovirales</taxon>
        <taxon>Sedoreoviridae</taxon>
        <taxon>Rotavirus</taxon>
        <taxon>Rotavirus A</taxon>
    </lineage>
</organism>
<reference key="1">
    <citation type="journal article" date="1983" name="Nucleic Acids Res.">
        <title>Nucleotide sequence of the gene encoding the serotype-specific glycoprotein of UK bovine rotavirus.</title>
        <authorList>
            <person name="Elleman T.C."/>
            <person name="Hoyne P.A."/>
            <person name="Dyall-Smith M.L."/>
            <person name="Holmes I.H."/>
            <person name="Azad A.A."/>
        </authorList>
    </citation>
    <scope>NUCLEOTIDE SEQUENCE [MRNA]</scope>
</reference>
<comment type="function">
    <text evidence="2">Calcium-binding protein that interacts with rotavirus cell receptors once the initial attachment by VP4 has been achieved. Rotavirus attachment and entry into the host cell probably involves multiple sequential contacts between the outer capsid proteins VP4 and VP7, and the cell receptors. Following entry into the host cell, low intracellular or intravesicular Ca(2+) concentration probably causes the calcium-stabilized VP7 trimers to dissociate from the virion. This step is probably necessary for the membrane-disrupting entry step and the release of VP4, which is locked onto the virion by VP7.</text>
</comment>
<comment type="subunit">
    <text evidence="2">Homotrimer; disulfide-linked. 2 Ca(2+) ions bound at each subunit interface in the trimer hold the trimer together. Interacts with the intermediate capsid protein VP6. Interacts with the outer capsid protein VP5*.</text>
</comment>
<comment type="subcellular location">
    <subcellularLocation>
        <location evidence="2">Virion</location>
    </subcellularLocation>
    <subcellularLocation>
        <location evidence="2">Host endoplasmic reticulum lumen</location>
    </subcellularLocation>
    <text evidence="2">The outer layer contains 780 copies of VP7, grouped as 260 trimers. Immature double-layered particles assembled in the cytoplasm bud across the membrane of the endoplasmic reticulum, acquiring during this process a transient lipid membrane that is modified with the ER resident viral glycoproteins NSP4 and VP7; these enveloped particles also contain VP4. As the particles move towards the interior of the ER cisternae, the transient lipid membrane and the non-structural protein NSP4 are lost, while the virus surface proteins VP4 and VP7 rearrange to form the outermost virus protein layer, yielding mature infectious triple-layered particles.</text>
</comment>
<comment type="alternative products">
    <event type="alternative initiation"/>
    <isoform>
        <id>P03534-1</id>
        <name>1</name>
        <sequence type="displayed"/>
    </isoform>
    <isoform>
        <id>P03534-2</id>
        <name>2</name>
        <sequence type="described" ref="VSP_038612"/>
    </isoform>
</comment>
<comment type="PTM">
    <text evidence="2">N-glycosylated.</text>
</comment>
<comment type="PTM">
    <text evidence="2">The N-terminus is blocked possibly by pyroglutamic acid.</text>
</comment>
<comment type="miscellaneous">
    <text evidence="2">Some rotavirus strains are neuraminidase-sensitive and require sialic acid to attach to the cell surface. Some rotavirus strains are integrin-dependent. Some rotavirus strains depend on ganglioside for their entry into the host cell. Hsp70 also seems to be involved in the entry of some strains.</text>
</comment>
<comment type="miscellaneous">
    <text evidence="2">In group A rotaviruses, VP7 defines the G serotype.</text>
</comment>
<comment type="miscellaneous">
    <molecule>Isoform 2</molecule>
    <text evidence="3">Produced by alternative initiation at Met-30 of isoform 1.</text>
</comment>
<comment type="similarity">
    <text evidence="2">Belongs to the rotavirus VP7 family.</text>
</comment>
<name>VP7_ROTBU</name>
<protein>
    <recommendedName>
        <fullName evidence="2">Outer capsid glycoprotein VP7</fullName>
    </recommendedName>
</protein>
<organismHost>
    <name type="scientific">Bos taurus</name>
    <name type="common">Bovine</name>
    <dbReference type="NCBI Taxonomy" id="9913"/>
</organismHost>